<organism>
    <name type="scientific">Azotobacter vinelandii (strain DJ / ATCC BAA-1303)</name>
    <dbReference type="NCBI Taxonomy" id="322710"/>
    <lineage>
        <taxon>Bacteria</taxon>
        <taxon>Pseudomonadati</taxon>
        <taxon>Pseudomonadota</taxon>
        <taxon>Gammaproteobacteria</taxon>
        <taxon>Pseudomonadales</taxon>
        <taxon>Pseudomonadaceae</taxon>
        <taxon>Azotobacter</taxon>
    </lineage>
</organism>
<evidence type="ECO:0000255" key="1">
    <source>
        <dbReference type="HAMAP-Rule" id="MF_00386"/>
    </source>
</evidence>
<evidence type="ECO:0000256" key="2">
    <source>
        <dbReference type="SAM" id="MobiDB-lite"/>
    </source>
</evidence>
<proteinExistence type="inferred from homology"/>
<comment type="function">
    <text evidence="1">Could be involved in insertion of integral membrane proteins into the membrane.</text>
</comment>
<comment type="subcellular location">
    <subcellularLocation>
        <location evidence="1">Cell inner membrane</location>
        <topology evidence="1">Peripheral membrane protein</topology>
        <orientation evidence="1">Cytoplasmic side</orientation>
    </subcellularLocation>
</comment>
<comment type="similarity">
    <text evidence="1">Belongs to the UPF0161 family.</text>
</comment>
<name>YIDD_AZOVD</name>
<keyword id="KW-0997">Cell inner membrane</keyword>
<keyword id="KW-1003">Cell membrane</keyword>
<keyword id="KW-0472">Membrane</keyword>
<feature type="chain" id="PRO_1000205777" description="Putative membrane protein insertion efficiency factor">
    <location>
        <begin position="1"/>
        <end position="81"/>
    </location>
</feature>
<feature type="region of interest" description="Disordered" evidence="2">
    <location>
        <begin position="59"/>
        <end position="81"/>
    </location>
</feature>
<protein>
    <recommendedName>
        <fullName evidence="1">Putative membrane protein insertion efficiency factor</fullName>
    </recommendedName>
</protein>
<reference key="1">
    <citation type="journal article" date="2009" name="J. Bacteriol.">
        <title>Genome sequence of Azotobacter vinelandii, an obligate aerobe specialized to support diverse anaerobic metabolic processes.</title>
        <authorList>
            <person name="Setubal J.C."/>
            <person name="Dos Santos P."/>
            <person name="Goldman B.S."/>
            <person name="Ertesvaag H."/>
            <person name="Espin G."/>
            <person name="Rubio L.M."/>
            <person name="Valla S."/>
            <person name="Almeida N.F."/>
            <person name="Balasubramanian D."/>
            <person name="Cromes L."/>
            <person name="Curatti L."/>
            <person name="Du Z."/>
            <person name="Godsy E."/>
            <person name="Goodner B."/>
            <person name="Hellner-Burris K."/>
            <person name="Hernandez J.A."/>
            <person name="Houmiel K."/>
            <person name="Imperial J."/>
            <person name="Kennedy C."/>
            <person name="Larson T.J."/>
            <person name="Latreille P."/>
            <person name="Ligon L.S."/>
            <person name="Lu J."/>
            <person name="Maerk M."/>
            <person name="Miller N.M."/>
            <person name="Norton S."/>
            <person name="O'Carroll I.P."/>
            <person name="Paulsen I."/>
            <person name="Raulfs E.C."/>
            <person name="Roemer R."/>
            <person name="Rosser J."/>
            <person name="Segura D."/>
            <person name="Slater S."/>
            <person name="Stricklin S.L."/>
            <person name="Studholme D.J."/>
            <person name="Sun J."/>
            <person name="Viana C.J."/>
            <person name="Wallin E."/>
            <person name="Wang B."/>
            <person name="Wheeler C."/>
            <person name="Zhu H."/>
            <person name="Dean D.R."/>
            <person name="Dixon R."/>
            <person name="Wood D."/>
        </authorList>
    </citation>
    <scope>NUCLEOTIDE SEQUENCE [LARGE SCALE GENOMIC DNA]</scope>
    <source>
        <strain>DJ / ATCC BAA-1303</strain>
    </source>
</reference>
<dbReference type="EMBL" id="CP001157">
    <property type="protein sequence ID" value="ACO81316.1"/>
    <property type="molecule type" value="Genomic_DNA"/>
</dbReference>
<dbReference type="RefSeq" id="WP_012703669.1">
    <property type="nucleotide sequence ID" value="NC_012560.1"/>
</dbReference>
<dbReference type="STRING" id="322710.Avin_52460"/>
<dbReference type="EnsemblBacteria" id="ACO81316">
    <property type="protein sequence ID" value="ACO81316"/>
    <property type="gene ID" value="Avin_52460"/>
</dbReference>
<dbReference type="GeneID" id="88188053"/>
<dbReference type="KEGG" id="avn:Avin_52460"/>
<dbReference type="eggNOG" id="COG0759">
    <property type="taxonomic scope" value="Bacteria"/>
</dbReference>
<dbReference type="HOGENOM" id="CLU_144811_6_1_6"/>
<dbReference type="OrthoDB" id="9801753at2"/>
<dbReference type="Proteomes" id="UP000002424">
    <property type="component" value="Chromosome"/>
</dbReference>
<dbReference type="GO" id="GO:0005886">
    <property type="term" value="C:plasma membrane"/>
    <property type="evidence" value="ECO:0007669"/>
    <property type="project" value="UniProtKB-SubCell"/>
</dbReference>
<dbReference type="HAMAP" id="MF_00386">
    <property type="entry name" value="UPF0161_YidD"/>
    <property type="match status" value="1"/>
</dbReference>
<dbReference type="InterPro" id="IPR002696">
    <property type="entry name" value="Membr_insert_effic_factor_YidD"/>
</dbReference>
<dbReference type="NCBIfam" id="TIGR00278">
    <property type="entry name" value="membrane protein insertion efficiency factor YidD"/>
    <property type="match status" value="1"/>
</dbReference>
<dbReference type="PANTHER" id="PTHR33383">
    <property type="entry name" value="MEMBRANE PROTEIN INSERTION EFFICIENCY FACTOR-RELATED"/>
    <property type="match status" value="1"/>
</dbReference>
<dbReference type="PANTHER" id="PTHR33383:SF1">
    <property type="entry name" value="MEMBRANE PROTEIN INSERTION EFFICIENCY FACTOR-RELATED"/>
    <property type="match status" value="1"/>
</dbReference>
<dbReference type="Pfam" id="PF01809">
    <property type="entry name" value="YidD"/>
    <property type="match status" value="1"/>
</dbReference>
<dbReference type="SMART" id="SM01234">
    <property type="entry name" value="Haemolytic"/>
    <property type="match status" value="1"/>
</dbReference>
<accession>C1DNF8</accession>
<gene>
    <name type="ordered locus">Avin_52460</name>
</gene>
<sequence length="81" mass="9099">MRKLALAAIQFYRYAISPLMANHCRFHPSCSCYAHEAISTHGLLRGGWLSLRRLGRCHPWNPGGYDPVPPIKTSRSSSMAE</sequence>